<name>NUOK_BARHE</name>
<proteinExistence type="inferred from homology"/>
<sequence length="102" mass="11148">MHIDIMHYLIVSALMFTIGIAGIFLNRKNVIIILMSIELILLSVNLNFVAFSAFLHDLVGQVFALFILTVAAAEAAIGLAILVVFFRNRGSIAVEDVNVMKG</sequence>
<evidence type="ECO:0000255" key="1">
    <source>
        <dbReference type="HAMAP-Rule" id="MF_01456"/>
    </source>
</evidence>
<organism>
    <name type="scientific">Bartonella henselae (strain ATCC 49882 / DSM 28221 / CCUG 30454 / Houston 1)</name>
    <name type="common">Rochalimaea henselae</name>
    <dbReference type="NCBI Taxonomy" id="283166"/>
    <lineage>
        <taxon>Bacteria</taxon>
        <taxon>Pseudomonadati</taxon>
        <taxon>Pseudomonadota</taxon>
        <taxon>Alphaproteobacteria</taxon>
        <taxon>Hyphomicrobiales</taxon>
        <taxon>Bartonellaceae</taxon>
        <taxon>Bartonella</taxon>
    </lineage>
</organism>
<keyword id="KW-0997">Cell inner membrane</keyword>
<keyword id="KW-1003">Cell membrane</keyword>
<keyword id="KW-0472">Membrane</keyword>
<keyword id="KW-0520">NAD</keyword>
<keyword id="KW-0874">Quinone</keyword>
<keyword id="KW-1278">Translocase</keyword>
<keyword id="KW-0812">Transmembrane</keyword>
<keyword id="KW-1133">Transmembrane helix</keyword>
<keyword id="KW-0813">Transport</keyword>
<keyword id="KW-0830">Ubiquinone</keyword>
<gene>
    <name evidence="1" type="primary">nuoK</name>
    <name type="ordered locus">BH08850</name>
</gene>
<protein>
    <recommendedName>
        <fullName evidence="1">NADH-quinone oxidoreductase subunit K</fullName>
        <ecNumber evidence="1">7.1.1.-</ecNumber>
    </recommendedName>
    <alternativeName>
        <fullName evidence="1">NADH dehydrogenase I subunit K</fullName>
    </alternativeName>
    <alternativeName>
        <fullName evidence="1">NDH-1 subunit K</fullName>
    </alternativeName>
</protein>
<accession>Q6G398</accession>
<comment type="function">
    <text evidence="1">NDH-1 shuttles electrons from NADH, via FMN and iron-sulfur (Fe-S) centers, to quinones in the respiratory chain. The immediate electron acceptor for the enzyme in this species is believed to be ubiquinone. Couples the redox reaction to proton translocation (for every two electrons transferred, four hydrogen ions are translocated across the cytoplasmic membrane), and thus conserves the redox energy in a proton gradient.</text>
</comment>
<comment type="catalytic activity">
    <reaction evidence="1">
        <text>a quinone + NADH + 5 H(+)(in) = a quinol + NAD(+) + 4 H(+)(out)</text>
        <dbReference type="Rhea" id="RHEA:57888"/>
        <dbReference type="ChEBI" id="CHEBI:15378"/>
        <dbReference type="ChEBI" id="CHEBI:24646"/>
        <dbReference type="ChEBI" id="CHEBI:57540"/>
        <dbReference type="ChEBI" id="CHEBI:57945"/>
        <dbReference type="ChEBI" id="CHEBI:132124"/>
    </reaction>
</comment>
<comment type="subunit">
    <text evidence="1">NDH-1 is composed of 14 different subunits. Subunits NuoA, H, J, K, L, M, N constitute the membrane sector of the complex.</text>
</comment>
<comment type="subcellular location">
    <subcellularLocation>
        <location evidence="1">Cell inner membrane</location>
        <topology evidence="1">Multi-pass membrane protein</topology>
    </subcellularLocation>
</comment>
<comment type="similarity">
    <text evidence="1">Belongs to the complex I subunit 4L family.</text>
</comment>
<dbReference type="EC" id="7.1.1.-" evidence="1"/>
<dbReference type="EMBL" id="BX897699">
    <property type="protein sequence ID" value="CAF27683.1"/>
    <property type="molecule type" value="Genomic_DNA"/>
</dbReference>
<dbReference type="RefSeq" id="WP_011180778.1">
    <property type="nucleotide sequence ID" value="NZ_LRIJ02000001.1"/>
</dbReference>
<dbReference type="SMR" id="Q6G398"/>
<dbReference type="PaxDb" id="283166-BH08850"/>
<dbReference type="EnsemblBacteria" id="CAF27683">
    <property type="protein sequence ID" value="CAF27683"/>
    <property type="gene ID" value="BH08850"/>
</dbReference>
<dbReference type="GeneID" id="92985453"/>
<dbReference type="KEGG" id="bhe:BH08850"/>
<dbReference type="eggNOG" id="COG0713">
    <property type="taxonomic scope" value="Bacteria"/>
</dbReference>
<dbReference type="OrthoDB" id="9811124at2"/>
<dbReference type="Proteomes" id="UP000000421">
    <property type="component" value="Chromosome"/>
</dbReference>
<dbReference type="GO" id="GO:0030964">
    <property type="term" value="C:NADH dehydrogenase complex"/>
    <property type="evidence" value="ECO:0007669"/>
    <property type="project" value="TreeGrafter"/>
</dbReference>
<dbReference type="GO" id="GO:0005886">
    <property type="term" value="C:plasma membrane"/>
    <property type="evidence" value="ECO:0007669"/>
    <property type="project" value="UniProtKB-SubCell"/>
</dbReference>
<dbReference type="GO" id="GO:0050136">
    <property type="term" value="F:NADH:ubiquinone reductase (non-electrogenic) activity"/>
    <property type="evidence" value="ECO:0007669"/>
    <property type="project" value="UniProtKB-UniRule"/>
</dbReference>
<dbReference type="GO" id="GO:0048038">
    <property type="term" value="F:quinone binding"/>
    <property type="evidence" value="ECO:0007669"/>
    <property type="project" value="UniProtKB-KW"/>
</dbReference>
<dbReference type="GO" id="GO:0042773">
    <property type="term" value="P:ATP synthesis coupled electron transport"/>
    <property type="evidence" value="ECO:0007669"/>
    <property type="project" value="InterPro"/>
</dbReference>
<dbReference type="FunFam" id="1.10.287.3510:FF:000001">
    <property type="entry name" value="NADH-quinone oxidoreductase subunit K"/>
    <property type="match status" value="1"/>
</dbReference>
<dbReference type="Gene3D" id="1.10.287.3510">
    <property type="match status" value="1"/>
</dbReference>
<dbReference type="HAMAP" id="MF_01456">
    <property type="entry name" value="NDH1_NuoK"/>
    <property type="match status" value="1"/>
</dbReference>
<dbReference type="InterPro" id="IPR001133">
    <property type="entry name" value="NADH_UbQ_OxRdtase_chain4L/K"/>
</dbReference>
<dbReference type="InterPro" id="IPR039428">
    <property type="entry name" value="NUOK/Mnh_C1-like"/>
</dbReference>
<dbReference type="NCBIfam" id="NF004320">
    <property type="entry name" value="PRK05715.1-2"/>
    <property type="match status" value="1"/>
</dbReference>
<dbReference type="NCBIfam" id="NF004321">
    <property type="entry name" value="PRK05715.1-3"/>
    <property type="match status" value="1"/>
</dbReference>
<dbReference type="NCBIfam" id="NF004323">
    <property type="entry name" value="PRK05715.1-5"/>
    <property type="match status" value="1"/>
</dbReference>
<dbReference type="PANTHER" id="PTHR11434:SF21">
    <property type="entry name" value="NADH DEHYDROGENASE SUBUNIT 4L-RELATED"/>
    <property type="match status" value="1"/>
</dbReference>
<dbReference type="PANTHER" id="PTHR11434">
    <property type="entry name" value="NADH-UBIQUINONE OXIDOREDUCTASE SUBUNIT ND4L"/>
    <property type="match status" value="1"/>
</dbReference>
<dbReference type="Pfam" id="PF00420">
    <property type="entry name" value="Oxidored_q2"/>
    <property type="match status" value="1"/>
</dbReference>
<feature type="chain" id="PRO_0000389953" description="NADH-quinone oxidoreductase subunit K">
    <location>
        <begin position="1"/>
        <end position="102"/>
    </location>
</feature>
<feature type="transmembrane region" description="Helical" evidence="1">
    <location>
        <begin position="5"/>
        <end position="25"/>
    </location>
</feature>
<feature type="transmembrane region" description="Helical" evidence="1">
    <location>
        <begin position="31"/>
        <end position="51"/>
    </location>
</feature>
<feature type="transmembrane region" description="Helical" evidence="1">
    <location>
        <begin position="66"/>
        <end position="86"/>
    </location>
</feature>
<reference key="1">
    <citation type="journal article" date="2004" name="Proc. Natl. Acad. Sci. U.S.A.">
        <title>The louse-borne human pathogen Bartonella quintana is a genomic derivative of the zoonotic agent Bartonella henselae.</title>
        <authorList>
            <person name="Alsmark U.C.M."/>
            <person name="Frank A.C."/>
            <person name="Karlberg E.O."/>
            <person name="Legault B.-A."/>
            <person name="Ardell D.H."/>
            <person name="Canbaeck B."/>
            <person name="Eriksson A.-S."/>
            <person name="Naeslund A.K."/>
            <person name="Handley S.A."/>
            <person name="Huvet M."/>
            <person name="La Scola B."/>
            <person name="Holmberg M."/>
            <person name="Andersson S.G.E."/>
        </authorList>
    </citation>
    <scope>NUCLEOTIDE SEQUENCE [LARGE SCALE GENOMIC DNA]</scope>
    <source>
        <strain>ATCC 49882 / DSM 28221 / CCUG 30454 / Houston 1</strain>
    </source>
</reference>